<keyword id="KW-1003">Cell membrane</keyword>
<keyword id="KW-0472">Membrane</keyword>
<keyword id="KW-1185">Reference proteome</keyword>
<keyword id="KW-0812">Transmembrane</keyword>
<keyword id="KW-1133">Transmembrane helix</keyword>
<comment type="subcellular location">
    <subcellularLocation>
        <location evidence="1">Cell membrane</location>
        <topology evidence="1">Multi-pass membrane protein</topology>
    </subcellularLocation>
</comment>
<comment type="similarity">
    <text evidence="1">Belongs to the UPF0344 family.</text>
</comment>
<name>Y697_GEOKA</name>
<dbReference type="EMBL" id="BA000043">
    <property type="protein sequence ID" value="BAD74982.1"/>
    <property type="molecule type" value="Genomic_DNA"/>
</dbReference>
<dbReference type="RefSeq" id="WP_011230200.1">
    <property type="nucleotide sequence ID" value="NC_006510.1"/>
</dbReference>
<dbReference type="STRING" id="235909.GK0697"/>
<dbReference type="KEGG" id="gka:GK0697"/>
<dbReference type="eggNOG" id="ENOG5032W2Q">
    <property type="taxonomic scope" value="Bacteria"/>
</dbReference>
<dbReference type="HOGENOM" id="CLU_146641_1_1_9"/>
<dbReference type="Proteomes" id="UP000001172">
    <property type="component" value="Chromosome"/>
</dbReference>
<dbReference type="GO" id="GO:0005886">
    <property type="term" value="C:plasma membrane"/>
    <property type="evidence" value="ECO:0007669"/>
    <property type="project" value="UniProtKB-SubCell"/>
</dbReference>
<dbReference type="HAMAP" id="MF_01536">
    <property type="entry name" value="UPF0344"/>
    <property type="match status" value="1"/>
</dbReference>
<dbReference type="InterPro" id="IPR010899">
    <property type="entry name" value="UPF0344"/>
</dbReference>
<dbReference type="NCBIfam" id="NF010196">
    <property type="entry name" value="PRK13673.1-3"/>
    <property type="match status" value="1"/>
</dbReference>
<dbReference type="Pfam" id="PF07457">
    <property type="entry name" value="DUF1516"/>
    <property type="match status" value="1"/>
</dbReference>
<sequence length="117" mass="12898">MTHAHITSWLITIVLFFLAVSMERQGAGKAKIVQMVLRLFYILTIVTGLLLLHSIASISALYWLKALAGLWVIGAMEMVLAAEKKGKSAAARWTQWVIALAVTLFLGLLLPLGFDLF</sequence>
<feature type="chain" id="PRO_0000105887" description="UPF0344 protein GK0697">
    <location>
        <begin position="1"/>
        <end position="117"/>
    </location>
</feature>
<feature type="transmembrane region" description="Helical" evidence="1">
    <location>
        <begin position="1"/>
        <end position="21"/>
    </location>
</feature>
<feature type="transmembrane region" description="Helical" evidence="1">
    <location>
        <begin position="39"/>
        <end position="59"/>
    </location>
</feature>
<feature type="transmembrane region" description="Helical" evidence="1">
    <location>
        <begin position="60"/>
        <end position="80"/>
    </location>
</feature>
<feature type="transmembrane region" description="Helical" evidence="1">
    <location>
        <begin position="97"/>
        <end position="117"/>
    </location>
</feature>
<evidence type="ECO:0000255" key="1">
    <source>
        <dbReference type="HAMAP-Rule" id="MF_01536"/>
    </source>
</evidence>
<protein>
    <recommendedName>
        <fullName evidence="1">UPF0344 protein GK0697</fullName>
    </recommendedName>
</protein>
<proteinExistence type="inferred from homology"/>
<organism>
    <name type="scientific">Geobacillus kaustophilus (strain HTA426)</name>
    <dbReference type="NCBI Taxonomy" id="235909"/>
    <lineage>
        <taxon>Bacteria</taxon>
        <taxon>Bacillati</taxon>
        <taxon>Bacillota</taxon>
        <taxon>Bacilli</taxon>
        <taxon>Bacillales</taxon>
        <taxon>Anoxybacillaceae</taxon>
        <taxon>Geobacillus</taxon>
        <taxon>Geobacillus thermoleovorans group</taxon>
    </lineage>
</organism>
<reference key="1">
    <citation type="journal article" date="2004" name="Nucleic Acids Res.">
        <title>Thermoadaptation trait revealed by the genome sequence of thermophilic Geobacillus kaustophilus.</title>
        <authorList>
            <person name="Takami H."/>
            <person name="Takaki Y."/>
            <person name="Chee G.-J."/>
            <person name="Nishi S."/>
            <person name="Shimamura S."/>
            <person name="Suzuki H."/>
            <person name="Matsui S."/>
            <person name="Uchiyama I."/>
        </authorList>
    </citation>
    <scope>NUCLEOTIDE SEQUENCE [LARGE SCALE GENOMIC DNA]</scope>
    <source>
        <strain>HTA426</strain>
    </source>
</reference>
<accession>Q5L248</accession>
<gene>
    <name type="ordered locus">GK0697</name>
</gene>